<organism>
    <name type="scientific">Escherichia coli O17:K52:H18 (strain UMN026 / ExPEC)</name>
    <dbReference type="NCBI Taxonomy" id="585056"/>
    <lineage>
        <taxon>Bacteria</taxon>
        <taxon>Pseudomonadati</taxon>
        <taxon>Pseudomonadota</taxon>
        <taxon>Gammaproteobacteria</taxon>
        <taxon>Enterobacterales</taxon>
        <taxon>Enterobacteriaceae</taxon>
        <taxon>Escherichia</taxon>
    </lineage>
</organism>
<keyword id="KW-0963">Cytoplasm</keyword>
<keyword id="KW-0227">DNA damage</keyword>
<keyword id="KW-0233">DNA recombination</keyword>
<keyword id="KW-0234">DNA repair</keyword>
<keyword id="KW-0238">DNA-binding</keyword>
<keyword id="KW-0255">Endonuclease</keyword>
<keyword id="KW-0378">Hydrolase</keyword>
<keyword id="KW-0460">Magnesium</keyword>
<keyword id="KW-0479">Metal-binding</keyword>
<keyword id="KW-0540">Nuclease</keyword>
<name>RUVC_ECOLU</name>
<gene>
    <name evidence="1" type="primary">ruvC</name>
    <name type="ordered locus">ECUMN_2161</name>
</gene>
<reference key="1">
    <citation type="journal article" date="2009" name="PLoS Genet.">
        <title>Organised genome dynamics in the Escherichia coli species results in highly diverse adaptive paths.</title>
        <authorList>
            <person name="Touchon M."/>
            <person name="Hoede C."/>
            <person name="Tenaillon O."/>
            <person name="Barbe V."/>
            <person name="Baeriswyl S."/>
            <person name="Bidet P."/>
            <person name="Bingen E."/>
            <person name="Bonacorsi S."/>
            <person name="Bouchier C."/>
            <person name="Bouvet O."/>
            <person name="Calteau A."/>
            <person name="Chiapello H."/>
            <person name="Clermont O."/>
            <person name="Cruveiller S."/>
            <person name="Danchin A."/>
            <person name="Diard M."/>
            <person name="Dossat C."/>
            <person name="Karoui M.E."/>
            <person name="Frapy E."/>
            <person name="Garry L."/>
            <person name="Ghigo J.M."/>
            <person name="Gilles A.M."/>
            <person name="Johnson J."/>
            <person name="Le Bouguenec C."/>
            <person name="Lescat M."/>
            <person name="Mangenot S."/>
            <person name="Martinez-Jehanne V."/>
            <person name="Matic I."/>
            <person name="Nassif X."/>
            <person name="Oztas S."/>
            <person name="Petit M.A."/>
            <person name="Pichon C."/>
            <person name="Rouy Z."/>
            <person name="Ruf C.S."/>
            <person name="Schneider D."/>
            <person name="Tourret J."/>
            <person name="Vacherie B."/>
            <person name="Vallenet D."/>
            <person name="Medigue C."/>
            <person name="Rocha E.P.C."/>
            <person name="Denamur E."/>
        </authorList>
    </citation>
    <scope>NUCLEOTIDE SEQUENCE [LARGE SCALE GENOMIC DNA]</scope>
    <source>
        <strain>UMN026 / ExPEC</strain>
    </source>
</reference>
<sequence>MAIILGIDPGSRVTGYGVIRQVGRQLSYLGSGCIRTKVDDLPSRLKLIYAGVTEIITQFQPDYFAIEQVFMAKNADSALKLGQARGVAIVAAVNQELPVFEYAARQVKQTVVGIGSAEKSQVQHMVRTLLKLPANPQADAADALAIAITHCHVSQNAMQMSESRLNLARGRLR</sequence>
<feature type="chain" id="PRO_1000195253" description="Crossover junction endodeoxyribonuclease RuvC">
    <location>
        <begin position="1"/>
        <end position="173"/>
    </location>
</feature>
<feature type="active site" evidence="1">
    <location>
        <position position="8"/>
    </location>
</feature>
<feature type="active site" evidence="1">
    <location>
        <position position="67"/>
    </location>
</feature>
<feature type="active site" evidence="1">
    <location>
        <position position="139"/>
    </location>
</feature>
<feature type="binding site" evidence="1">
    <location>
        <position position="8"/>
    </location>
    <ligand>
        <name>Mg(2+)</name>
        <dbReference type="ChEBI" id="CHEBI:18420"/>
        <label>1</label>
    </ligand>
</feature>
<feature type="binding site" evidence="1">
    <location>
        <position position="67"/>
    </location>
    <ligand>
        <name>Mg(2+)</name>
        <dbReference type="ChEBI" id="CHEBI:18420"/>
        <label>2</label>
    </ligand>
</feature>
<feature type="binding site" evidence="1">
    <location>
        <position position="139"/>
    </location>
    <ligand>
        <name>Mg(2+)</name>
        <dbReference type="ChEBI" id="CHEBI:18420"/>
        <label>1</label>
    </ligand>
</feature>
<proteinExistence type="inferred from homology"/>
<accession>B7NBL4</accession>
<comment type="function">
    <text evidence="1">The RuvA-RuvB-RuvC complex processes Holliday junction (HJ) DNA during genetic recombination and DNA repair. Endonuclease that resolves HJ intermediates. Cleaves cruciform DNA by making single-stranded nicks across the HJ at symmetrical positions within the homologous arms, yielding a 5'-phosphate and a 3'-hydroxyl group; requires a central core of homology in the junction. The consensus cleavage sequence is 5'-(A/T)TT(C/G)-3'. Cleavage occurs on the 3'-side of the TT dinucleotide at the point of strand exchange. HJ branch migration catalyzed by RuvA-RuvB allows RuvC to scan DNA until it finds its consensus sequence, where it cleaves and resolves the cruciform DNA.</text>
</comment>
<comment type="catalytic activity">
    <reaction evidence="1">
        <text>Endonucleolytic cleavage at a junction such as a reciprocal single-stranded crossover between two homologous DNA duplexes (Holliday junction).</text>
        <dbReference type="EC" id="3.1.21.10"/>
    </reaction>
</comment>
<comment type="cofactor">
    <cofactor evidence="1">
        <name>Mg(2+)</name>
        <dbReference type="ChEBI" id="CHEBI:18420"/>
    </cofactor>
    <text evidence="1">Binds 2 Mg(2+) ion per subunit.</text>
</comment>
<comment type="subunit">
    <text evidence="1">Homodimer which binds Holliday junction (HJ) DNA. The HJ becomes 2-fold symmetrical on binding to RuvC with unstacked arms; it has a different conformation from HJ DNA in complex with RuvA. In the full resolvosome a probable DNA-RuvA(4)-RuvB(12)-RuvC(2) complex forms which resolves the HJ.</text>
</comment>
<comment type="subcellular location">
    <subcellularLocation>
        <location evidence="1">Cytoplasm</location>
    </subcellularLocation>
</comment>
<comment type="similarity">
    <text evidence="1">Belongs to the RuvC family.</text>
</comment>
<evidence type="ECO:0000255" key="1">
    <source>
        <dbReference type="HAMAP-Rule" id="MF_00034"/>
    </source>
</evidence>
<protein>
    <recommendedName>
        <fullName evidence="1">Crossover junction endodeoxyribonuclease RuvC</fullName>
        <ecNumber evidence="1">3.1.21.10</ecNumber>
    </recommendedName>
    <alternativeName>
        <fullName evidence="1">Holliday junction nuclease RuvC</fullName>
    </alternativeName>
    <alternativeName>
        <fullName evidence="1">Holliday junction resolvase RuvC</fullName>
    </alternativeName>
</protein>
<dbReference type="EC" id="3.1.21.10" evidence="1"/>
<dbReference type="EMBL" id="CU928163">
    <property type="protein sequence ID" value="CAR13354.1"/>
    <property type="molecule type" value="Genomic_DNA"/>
</dbReference>
<dbReference type="RefSeq" id="WP_001295503.1">
    <property type="nucleotide sequence ID" value="NC_011751.1"/>
</dbReference>
<dbReference type="RefSeq" id="YP_002412883.1">
    <property type="nucleotide sequence ID" value="NC_011751.1"/>
</dbReference>
<dbReference type="SMR" id="B7NBL4"/>
<dbReference type="STRING" id="585056.ECUMN_2161"/>
<dbReference type="GeneID" id="89516631"/>
<dbReference type="KEGG" id="eum:ECUMN_2161"/>
<dbReference type="PATRIC" id="fig|585056.7.peg.2346"/>
<dbReference type="HOGENOM" id="CLU_091257_2_1_6"/>
<dbReference type="Proteomes" id="UP000007097">
    <property type="component" value="Chromosome"/>
</dbReference>
<dbReference type="GO" id="GO:0005737">
    <property type="term" value="C:cytoplasm"/>
    <property type="evidence" value="ECO:0007669"/>
    <property type="project" value="UniProtKB-SubCell"/>
</dbReference>
<dbReference type="GO" id="GO:0048476">
    <property type="term" value="C:Holliday junction resolvase complex"/>
    <property type="evidence" value="ECO:0007669"/>
    <property type="project" value="UniProtKB-UniRule"/>
</dbReference>
<dbReference type="GO" id="GO:0008821">
    <property type="term" value="F:crossover junction DNA endonuclease activity"/>
    <property type="evidence" value="ECO:0007669"/>
    <property type="project" value="UniProtKB-UniRule"/>
</dbReference>
<dbReference type="GO" id="GO:0003677">
    <property type="term" value="F:DNA binding"/>
    <property type="evidence" value="ECO:0007669"/>
    <property type="project" value="UniProtKB-KW"/>
</dbReference>
<dbReference type="GO" id="GO:0000287">
    <property type="term" value="F:magnesium ion binding"/>
    <property type="evidence" value="ECO:0007669"/>
    <property type="project" value="UniProtKB-UniRule"/>
</dbReference>
<dbReference type="GO" id="GO:0006310">
    <property type="term" value="P:DNA recombination"/>
    <property type="evidence" value="ECO:0007669"/>
    <property type="project" value="UniProtKB-UniRule"/>
</dbReference>
<dbReference type="GO" id="GO:0006281">
    <property type="term" value="P:DNA repair"/>
    <property type="evidence" value="ECO:0007669"/>
    <property type="project" value="UniProtKB-UniRule"/>
</dbReference>
<dbReference type="CDD" id="cd16962">
    <property type="entry name" value="RuvC"/>
    <property type="match status" value="1"/>
</dbReference>
<dbReference type="FunFam" id="3.30.420.10:FF:000002">
    <property type="entry name" value="Crossover junction endodeoxyribonuclease RuvC"/>
    <property type="match status" value="1"/>
</dbReference>
<dbReference type="Gene3D" id="3.30.420.10">
    <property type="entry name" value="Ribonuclease H-like superfamily/Ribonuclease H"/>
    <property type="match status" value="1"/>
</dbReference>
<dbReference type="HAMAP" id="MF_00034">
    <property type="entry name" value="RuvC"/>
    <property type="match status" value="1"/>
</dbReference>
<dbReference type="InterPro" id="IPR012337">
    <property type="entry name" value="RNaseH-like_sf"/>
</dbReference>
<dbReference type="InterPro" id="IPR036397">
    <property type="entry name" value="RNaseH_sf"/>
</dbReference>
<dbReference type="InterPro" id="IPR020563">
    <property type="entry name" value="X-over_junc_endoDNase_Mg_BS"/>
</dbReference>
<dbReference type="InterPro" id="IPR002176">
    <property type="entry name" value="X-over_junc_endoDNase_RuvC"/>
</dbReference>
<dbReference type="NCBIfam" id="NF000711">
    <property type="entry name" value="PRK00039.2-1"/>
    <property type="match status" value="1"/>
</dbReference>
<dbReference type="NCBIfam" id="TIGR00228">
    <property type="entry name" value="ruvC"/>
    <property type="match status" value="1"/>
</dbReference>
<dbReference type="PANTHER" id="PTHR30194">
    <property type="entry name" value="CROSSOVER JUNCTION ENDODEOXYRIBONUCLEASE RUVC"/>
    <property type="match status" value="1"/>
</dbReference>
<dbReference type="PANTHER" id="PTHR30194:SF3">
    <property type="entry name" value="CROSSOVER JUNCTION ENDODEOXYRIBONUCLEASE RUVC"/>
    <property type="match status" value="1"/>
</dbReference>
<dbReference type="Pfam" id="PF02075">
    <property type="entry name" value="RuvC"/>
    <property type="match status" value="1"/>
</dbReference>
<dbReference type="PRINTS" id="PR00696">
    <property type="entry name" value="RSOLVASERUVC"/>
</dbReference>
<dbReference type="SUPFAM" id="SSF53098">
    <property type="entry name" value="Ribonuclease H-like"/>
    <property type="match status" value="1"/>
</dbReference>
<dbReference type="PROSITE" id="PS01321">
    <property type="entry name" value="RUVC"/>
    <property type="match status" value="1"/>
</dbReference>